<evidence type="ECO:0000255" key="1">
    <source>
        <dbReference type="HAMAP-Rule" id="MF_00169"/>
    </source>
</evidence>
<feature type="chain" id="PRO_1000077045" description="3-dehydroquinate dehydratase">
    <location>
        <begin position="1"/>
        <end position="145"/>
    </location>
</feature>
<feature type="active site" description="Proton acceptor" evidence="1">
    <location>
        <position position="23"/>
    </location>
</feature>
<feature type="active site" description="Proton donor" evidence="1">
    <location>
        <position position="101"/>
    </location>
</feature>
<feature type="binding site" evidence="1">
    <location>
        <position position="75"/>
    </location>
    <ligand>
        <name>substrate</name>
    </ligand>
</feature>
<feature type="binding site" evidence="1">
    <location>
        <position position="81"/>
    </location>
    <ligand>
        <name>substrate</name>
    </ligand>
</feature>
<feature type="binding site" evidence="1">
    <location>
        <position position="88"/>
    </location>
    <ligand>
        <name>substrate</name>
    </ligand>
</feature>
<feature type="binding site" evidence="1">
    <location>
        <begin position="102"/>
        <end position="103"/>
    </location>
    <ligand>
        <name>substrate</name>
    </ligand>
</feature>
<feature type="binding site" evidence="1">
    <location>
        <position position="112"/>
    </location>
    <ligand>
        <name>substrate</name>
    </ligand>
</feature>
<feature type="site" description="Transition state stabilizer" evidence="1">
    <location>
        <position position="18"/>
    </location>
</feature>
<reference key="1">
    <citation type="journal article" date="2004" name="Nat. Genet.">
        <title>Evidence in the Legionella pneumophila genome for exploitation of host cell functions and high genome plasticity.</title>
        <authorList>
            <person name="Cazalet C."/>
            <person name="Rusniok C."/>
            <person name="Brueggemann H."/>
            <person name="Zidane N."/>
            <person name="Magnier A."/>
            <person name="Ma L."/>
            <person name="Tichit M."/>
            <person name="Jarraud S."/>
            <person name="Bouchier C."/>
            <person name="Vandenesch F."/>
            <person name="Kunst F."/>
            <person name="Etienne J."/>
            <person name="Glaser P."/>
            <person name="Buchrieser C."/>
        </authorList>
    </citation>
    <scope>NUCLEOTIDE SEQUENCE [LARGE SCALE GENOMIC DNA]</scope>
    <source>
        <strain>Paris</strain>
    </source>
</reference>
<comment type="function">
    <text evidence="1">Catalyzes a trans-dehydration via an enolate intermediate.</text>
</comment>
<comment type="catalytic activity">
    <reaction evidence="1">
        <text>3-dehydroquinate = 3-dehydroshikimate + H2O</text>
        <dbReference type="Rhea" id="RHEA:21096"/>
        <dbReference type="ChEBI" id="CHEBI:15377"/>
        <dbReference type="ChEBI" id="CHEBI:16630"/>
        <dbReference type="ChEBI" id="CHEBI:32364"/>
        <dbReference type="EC" id="4.2.1.10"/>
    </reaction>
</comment>
<comment type="pathway">
    <text evidence="1">Metabolic intermediate biosynthesis; chorismate biosynthesis; chorismate from D-erythrose 4-phosphate and phosphoenolpyruvate: step 3/7.</text>
</comment>
<comment type="subunit">
    <text evidence="1">Homododecamer.</text>
</comment>
<comment type="similarity">
    <text evidence="1">Belongs to the type-II 3-dehydroquinase family.</text>
</comment>
<name>AROQ_LEGPA</name>
<sequence>MKKILVLHGPNLNLLGSREPSIYGHASLTEINGDLIQEADNAGIRLSCFQSNAEAELIQAVHQAGIDKINYIIINPAAFTHTSIALRDALSAVAIPFIEVHLSNIFSRETFRHHSYFSDIAVGVISGLGTKGYLLALQAIIKELK</sequence>
<dbReference type="EC" id="4.2.1.10" evidence="1"/>
<dbReference type="EMBL" id="CR628336">
    <property type="protein sequence ID" value="CAH11678.1"/>
    <property type="molecule type" value="Genomic_DNA"/>
</dbReference>
<dbReference type="RefSeq" id="WP_011213103.1">
    <property type="nucleotide sequence ID" value="NC_006368.1"/>
</dbReference>
<dbReference type="SMR" id="Q5X7S5"/>
<dbReference type="KEGG" id="lpp:lpp0530"/>
<dbReference type="LegioList" id="lpp0530"/>
<dbReference type="HOGENOM" id="CLU_090968_1_0_6"/>
<dbReference type="UniPathway" id="UPA00053">
    <property type="reaction ID" value="UER00086"/>
</dbReference>
<dbReference type="GO" id="GO:0003855">
    <property type="term" value="F:3-dehydroquinate dehydratase activity"/>
    <property type="evidence" value="ECO:0007669"/>
    <property type="project" value="UniProtKB-UniRule"/>
</dbReference>
<dbReference type="GO" id="GO:0008652">
    <property type="term" value="P:amino acid biosynthetic process"/>
    <property type="evidence" value="ECO:0007669"/>
    <property type="project" value="UniProtKB-KW"/>
</dbReference>
<dbReference type="GO" id="GO:0009073">
    <property type="term" value="P:aromatic amino acid family biosynthetic process"/>
    <property type="evidence" value="ECO:0007669"/>
    <property type="project" value="UniProtKB-KW"/>
</dbReference>
<dbReference type="GO" id="GO:0009423">
    <property type="term" value="P:chorismate biosynthetic process"/>
    <property type="evidence" value="ECO:0007669"/>
    <property type="project" value="UniProtKB-UniRule"/>
</dbReference>
<dbReference type="GO" id="GO:0019631">
    <property type="term" value="P:quinate catabolic process"/>
    <property type="evidence" value="ECO:0007669"/>
    <property type="project" value="TreeGrafter"/>
</dbReference>
<dbReference type="CDD" id="cd00466">
    <property type="entry name" value="DHQase_II"/>
    <property type="match status" value="1"/>
</dbReference>
<dbReference type="Gene3D" id="3.40.50.9100">
    <property type="entry name" value="Dehydroquinase, class II"/>
    <property type="match status" value="1"/>
</dbReference>
<dbReference type="HAMAP" id="MF_00169">
    <property type="entry name" value="AroQ"/>
    <property type="match status" value="1"/>
</dbReference>
<dbReference type="InterPro" id="IPR001874">
    <property type="entry name" value="DHquinase_II"/>
</dbReference>
<dbReference type="InterPro" id="IPR018509">
    <property type="entry name" value="DHquinase_II_CS"/>
</dbReference>
<dbReference type="InterPro" id="IPR036441">
    <property type="entry name" value="DHquinase_II_sf"/>
</dbReference>
<dbReference type="NCBIfam" id="TIGR01088">
    <property type="entry name" value="aroQ"/>
    <property type="match status" value="1"/>
</dbReference>
<dbReference type="NCBIfam" id="NF003804">
    <property type="entry name" value="PRK05395.1-1"/>
    <property type="match status" value="1"/>
</dbReference>
<dbReference type="NCBIfam" id="NF003805">
    <property type="entry name" value="PRK05395.1-2"/>
    <property type="match status" value="1"/>
</dbReference>
<dbReference type="NCBIfam" id="NF003806">
    <property type="entry name" value="PRK05395.1-3"/>
    <property type="match status" value="1"/>
</dbReference>
<dbReference type="NCBIfam" id="NF003807">
    <property type="entry name" value="PRK05395.1-4"/>
    <property type="match status" value="1"/>
</dbReference>
<dbReference type="PANTHER" id="PTHR21272">
    <property type="entry name" value="CATABOLIC 3-DEHYDROQUINASE"/>
    <property type="match status" value="1"/>
</dbReference>
<dbReference type="PANTHER" id="PTHR21272:SF3">
    <property type="entry name" value="CATABOLIC 3-DEHYDROQUINASE"/>
    <property type="match status" value="1"/>
</dbReference>
<dbReference type="Pfam" id="PF01220">
    <property type="entry name" value="DHquinase_II"/>
    <property type="match status" value="1"/>
</dbReference>
<dbReference type="PIRSF" id="PIRSF001399">
    <property type="entry name" value="DHquinase_II"/>
    <property type="match status" value="1"/>
</dbReference>
<dbReference type="SUPFAM" id="SSF52304">
    <property type="entry name" value="Type II 3-dehydroquinate dehydratase"/>
    <property type="match status" value="1"/>
</dbReference>
<dbReference type="PROSITE" id="PS01029">
    <property type="entry name" value="DEHYDROQUINASE_II"/>
    <property type="match status" value="1"/>
</dbReference>
<proteinExistence type="inferred from homology"/>
<organism>
    <name type="scientific">Legionella pneumophila (strain Paris)</name>
    <dbReference type="NCBI Taxonomy" id="297246"/>
    <lineage>
        <taxon>Bacteria</taxon>
        <taxon>Pseudomonadati</taxon>
        <taxon>Pseudomonadota</taxon>
        <taxon>Gammaproteobacteria</taxon>
        <taxon>Legionellales</taxon>
        <taxon>Legionellaceae</taxon>
        <taxon>Legionella</taxon>
    </lineage>
</organism>
<gene>
    <name evidence="1" type="primary">aroQ</name>
    <name type="ordered locus">lpp0530</name>
</gene>
<accession>Q5X7S5</accession>
<protein>
    <recommendedName>
        <fullName evidence="1">3-dehydroquinate dehydratase</fullName>
        <shortName evidence="1">3-dehydroquinase</shortName>
        <ecNumber evidence="1">4.2.1.10</ecNumber>
    </recommendedName>
    <alternativeName>
        <fullName evidence="1">Type II DHQase</fullName>
    </alternativeName>
</protein>
<keyword id="KW-0028">Amino-acid biosynthesis</keyword>
<keyword id="KW-0057">Aromatic amino acid biosynthesis</keyword>
<keyword id="KW-0456">Lyase</keyword>